<sequence length="276" mass="30580">MTLQQEIIRALGAKPHINAEEEIRRSVDFLKAYLKTYPFLKSLVLGISGGQDSTLTGKLCQTAITELREETGNDALQFIAVRLPFGVQADEQDCQDAIAFIQPDRVLTVNIKGAVLASEQALREAGIELSDFVRGNEKARERMKAQYSIAGMTNGVVVGTDHAAEAVTGFFTKYGDGGTDINPLFRLNKRQGKQLLAALGCPEHLYKKAPTADLEDDRPSLPDEAALGVTYDNIDDYLEGKTLDASIAKIIEGWYIRTEHKRRTPITVFDDFWKRS</sequence>
<accession>A8AHD1</accession>
<proteinExistence type="inferred from homology"/>
<keyword id="KW-0067">ATP-binding</keyword>
<keyword id="KW-0436">Ligase</keyword>
<keyword id="KW-0460">Magnesium</keyword>
<keyword id="KW-0479">Metal-binding</keyword>
<keyword id="KW-0520">NAD</keyword>
<keyword id="KW-0547">Nucleotide-binding</keyword>
<keyword id="KW-1185">Reference proteome</keyword>
<evidence type="ECO:0000255" key="1">
    <source>
        <dbReference type="HAMAP-Rule" id="MF_00193"/>
    </source>
</evidence>
<comment type="function">
    <text evidence="1">Catalyzes the ATP-dependent amidation of deamido-NAD to form NAD. Uses ammonia as a nitrogen source.</text>
</comment>
<comment type="catalytic activity">
    <reaction evidence="1">
        <text>deamido-NAD(+) + NH4(+) + ATP = AMP + diphosphate + NAD(+) + H(+)</text>
        <dbReference type="Rhea" id="RHEA:21188"/>
        <dbReference type="ChEBI" id="CHEBI:15378"/>
        <dbReference type="ChEBI" id="CHEBI:28938"/>
        <dbReference type="ChEBI" id="CHEBI:30616"/>
        <dbReference type="ChEBI" id="CHEBI:33019"/>
        <dbReference type="ChEBI" id="CHEBI:57540"/>
        <dbReference type="ChEBI" id="CHEBI:58437"/>
        <dbReference type="ChEBI" id="CHEBI:456215"/>
        <dbReference type="EC" id="6.3.1.5"/>
    </reaction>
</comment>
<comment type="pathway">
    <text evidence="1">Cofactor biosynthesis; NAD(+) biosynthesis; NAD(+) from deamido-NAD(+) (ammonia route): step 1/1.</text>
</comment>
<comment type="subunit">
    <text evidence="1">Homodimer.</text>
</comment>
<comment type="similarity">
    <text evidence="1">Belongs to the NAD synthetase family.</text>
</comment>
<organism>
    <name type="scientific">Citrobacter koseri (strain ATCC BAA-895 / CDC 4225-83 / SGSC4696)</name>
    <dbReference type="NCBI Taxonomy" id="290338"/>
    <lineage>
        <taxon>Bacteria</taxon>
        <taxon>Pseudomonadati</taxon>
        <taxon>Pseudomonadota</taxon>
        <taxon>Gammaproteobacteria</taxon>
        <taxon>Enterobacterales</taxon>
        <taxon>Enterobacteriaceae</taxon>
        <taxon>Citrobacter</taxon>
    </lineage>
</organism>
<protein>
    <recommendedName>
        <fullName evidence="1">NH(3)-dependent NAD(+) synthetase</fullName>
        <ecNumber evidence="1">6.3.1.5</ecNumber>
    </recommendedName>
</protein>
<feature type="chain" id="PRO_1000077546" description="NH(3)-dependent NAD(+) synthetase">
    <location>
        <begin position="1"/>
        <end position="276"/>
    </location>
</feature>
<feature type="binding site" evidence="1">
    <location>
        <begin position="46"/>
        <end position="53"/>
    </location>
    <ligand>
        <name>ATP</name>
        <dbReference type="ChEBI" id="CHEBI:30616"/>
    </ligand>
</feature>
<feature type="binding site" evidence="1">
    <location>
        <position position="52"/>
    </location>
    <ligand>
        <name>Mg(2+)</name>
        <dbReference type="ChEBI" id="CHEBI:18420"/>
    </ligand>
</feature>
<feature type="binding site" evidence="1">
    <location>
        <position position="140"/>
    </location>
    <ligand>
        <name>deamido-NAD(+)</name>
        <dbReference type="ChEBI" id="CHEBI:58437"/>
    </ligand>
</feature>
<feature type="binding site" evidence="1">
    <location>
        <position position="160"/>
    </location>
    <ligand>
        <name>ATP</name>
        <dbReference type="ChEBI" id="CHEBI:30616"/>
    </ligand>
</feature>
<feature type="binding site" evidence="1">
    <location>
        <position position="165"/>
    </location>
    <ligand>
        <name>Mg(2+)</name>
        <dbReference type="ChEBI" id="CHEBI:18420"/>
    </ligand>
</feature>
<feature type="binding site" evidence="1">
    <location>
        <position position="173"/>
    </location>
    <ligand>
        <name>deamido-NAD(+)</name>
        <dbReference type="ChEBI" id="CHEBI:58437"/>
    </ligand>
</feature>
<feature type="binding site" evidence="1">
    <location>
        <position position="180"/>
    </location>
    <ligand>
        <name>deamido-NAD(+)</name>
        <dbReference type="ChEBI" id="CHEBI:58437"/>
    </ligand>
</feature>
<feature type="binding site" evidence="1">
    <location>
        <position position="189"/>
    </location>
    <ligand>
        <name>ATP</name>
        <dbReference type="ChEBI" id="CHEBI:30616"/>
    </ligand>
</feature>
<feature type="binding site" evidence="1">
    <location>
        <position position="211"/>
    </location>
    <ligand>
        <name>ATP</name>
        <dbReference type="ChEBI" id="CHEBI:30616"/>
    </ligand>
</feature>
<feature type="binding site" evidence="1">
    <location>
        <begin position="260"/>
        <end position="261"/>
    </location>
    <ligand>
        <name>deamido-NAD(+)</name>
        <dbReference type="ChEBI" id="CHEBI:58437"/>
    </ligand>
</feature>
<gene>
    <name evidence="1" type="primary">nadE</name>
    <name type="ordered locus">CKO_01765</name>
</gene>
<dbReference type="EC" id="6.3.1.5" evidence="1"/>
<dbReference type="EMBL" id="CP000822">
    <property type="protein sequence ID" value="ABV12894.1"/>
    <property type="molecule type" value="Genomic_DNA"/>
</dbReference>
<dbReference type="RefSeq" id="WP_012132631.1">
    <property type="nucleotide sequence ID" value="NC_009792.1"/>
</dbReference>
<dbReference type="SMR" id="A8AHD1"/>
<dbReference type="STRING" id="290338.CKO_01765"/>
<dbReference type="GeneID" id="45135789"/>
<dbReference type="KEGG" id="cko:CKO_01765"/>
<dbReference type="HOGENOM" id="CLU_059327_3_0_6"/>
<dbReference type="OrthoDB" id="3266517at2"/>
<dbReference type="UniPathway" id="UPA00253">
    <property type="reaction ID" value="UER00333"/>
</dbReference>
<dbReference type="Proteomes" id="UP000008148">
    <property type="component" value="Chromosome"/>
</dbReference>
<dbReference type="GO" id="GO:0005737">
    <property type="term" value="C:cytoplasm"/>
    <property type="evidence" value="ECO:0007669"/>
    <property type="project" value="InterPro"/>
</dbReference>
<dbReference type="GO" id="GO:0005524">
    <property type="term" value="F:ATP binding"/>
    <property type="evidence" value="ECO:0007669"/>
    <property type="project" value="UniProtKB-UniRule"/>
</dbReference>
<dbReference type="GO" id="GO:0004359">
    <property type="term" value="F:glutaminase activity"/>
    <property type="evidence" value="ECO:0007669"/>
    <property type="project" value="InterPro"/>
</dbReference>
<dbReference type="GO" id="GO:0046872">
    <property type="term" value="F:metal ion binding"/>
    <property type="evidence" value="ECO:0007669"/>
    <property type="project" value="UniProtKB-KW"/>
</dbReference>
<dbReference type="GO" id="GO:0003952">
    <property type="term" value="F:NAD+ synthase (glutamine-hydrolyzing) activity"/>
    <property type="evidence" value="ECO:0007669"/>
    <property type="project" value="InterPro"/>
</dbReference>
<dbReference type="GO" id="GO:0008795">
    <property type="term" value="F:NAD+ synthase activity"/>
    <property type="evidence" value="ECO:0007669"/>
    <property type="project" value="UniProtKB-UniRule"/>
</dbReference>
<dbReference type="GO" id="GO:0009435">
    <property type="term" value="P:NAD biosynthetic process"/>
    <property type="evidence" value="ECO:0007669"/>
    <property type="project" value="UniProtKB-UniRule"/>
</dbReference>
<dbReference type="CDD" id="cd00553">
    <property type="entry name" value="NAD_synthase"/>
    <property type="match status" value="1"/>
</dbReference>
<dbReference type="FunFam" id="3.40.50.620:FF:000015">
    <property type="entry name" value="NH(3)-dependent NAD(+) synthetase"/>
    <property type="match status" value="1"/>
</dbReference>
<dbReference type="Gene3D" id="3.40.50.620">
    <property type="entry name" value="HUPs"/>
    <property type="match status" value="1"/>
</dbReference>
<dbReference type="HAMAP" id="MF_00193">
    <property type="entry name" value="NadE_ammonia_dep"/>
    <property type="match status" value="1"/>
</dbReference>
<dbReference type="InterPro" id="IPR022310">
    <property type="entry name" value="NAD/GMP_synthase"/>
</dbReference>
<dbReference type="InterPro" id="IPR003694">
    <property type="entry name" value="NAD_synthase"/>
</dbReference>
<dbReference type="InterPro" id="IPR022926">
    <property type="entry name" value="NH(3)-dep_NAD(+)_synth"/>
</dbReference>
<dbReference type="InterPro" id="IPR014729">
    <property type="entry name" value="Rossmann-like_a/b/a_fold"/>
</dbReference>
<dbReference type="NCBIfam" id="TIGR00552">
    <property type="entry name" value="nadE"/>
    <property type="match status" value="1"/>
</dbReference>
<dbReference type="NCBIfam" id="NF001979">
    <property type="entry name" value="PRK00768.1"/>
    <property type="match status" value="1"/>
</dbReference>
<dbReference type="PANTHER" id="PTHR23090">
    <property type="entry name" value="NH 3 /GLUTAMINE-DEPENDENT NAD + SYNTHETASE"/>
    <property type="match status" value="1"/>
</dbReference>
<dbReference type="PANTHER" id="PTHR23090:SF7">
    <property type="entry name" value="NH(3)-DEPENDENT NAD(+) SYNTHETASE"/>
    <property type="match status" value="1"/>
</dbReference>
<dbReference type="Pfam" id="PF02540">
    <property type="entry name" value="NAD_synthase"/>
    <property type="match status" value="1"/>
</dbReference>
<dbReference type="SUPFAM" id="SSF52402">
    <property type="entry name" value="Adenine nucleotide alpha hydrolases-like"/>
    <property type="match status" value="1"/>
</dbReference>
<reference key="1">
    <citation type="submission" date="2007-08" db="EMBL/GenBank/DDBJ databases">
        <authorList>
            <consortium name="The Citrobacter koseri Genome Sequencing Project"/>
            <person name="McClelland M."/>
            <person name="Sanderson E.K."/>
            <person name="Porwollik S."/>
            <person name="Spieth J."/>
            <person name="Clifton W.S."/>
            <person name="Latreille P."/>
            <person name="Courtney L."/>
            <person name="Wang C."/>
            <person name="Pepin K."/>
            <person name="Bhonagiri V."/>
            <person name="Nash W."/>
            <person name="Johnson M."/>
            <person name="Thiruvilangam P."/>
            <person name="Wilson R."/>
        </authorList>
    </citation>
    <scope>NUCLEOTIDE SEQUENCE [LARGE SCALE GENOMIC DNA]</scope>
    <source>
        <strain>ATCC BAA-895 / CDC 4225-83 / SGSC4696</strain>
    </source>
</reference>
<name>NADE_CITK8</name>